<feature type="chain" id="PRO_0000101985" description="Regulator of telomere elongation helicase 1">
    <location>
        <begin position="1"/>
        <end position="1219"/>
    </location>
</feature>
<feature type="domain" description="Helicase ATP-binding" evidence="1">
    <location>
        <begin position="7"/>
        <end position="296"/>
    </location>
</feature>
<feature type="region of interest" description="Disordered" evidence="2">
    <location>
        <begin position="287"/>
        <end position="306"/>
    </location>
</feature>
<feature type="region of interest" description="Disordered" evidence="2">
    <location>
        <begin position="757"/>
        <end position="786"/>
    </location>
</feature>
<feature type="region of interest" description="Disordered" evidence="2">
    <location>
        <begin position="839"/>
        <end position="877"/>
    </location>
</feature>
<feature type="region of interest" description="Disordered" evidence="2">
    <location>
        <begin position="979"/>
        <end position="1005"/>
    </location>
</feature>
<feature type="region of interest" description="Disordered" evidence="2">
    <location>
        <begin position="1017"/>
        <end position="1054"/>
    </location>
</feature>
<feature type="region of interest" description="Disordered" evidence="2">
    <location>
        <begin position="1132"/>
        <end position="1151"/>
    </location>
</feature>
<feature type="region of interest" description="Disordered" evidence="2">
    <location>
        <begin position="1159"/>
        <end position="1219"/>
    </location>
</feature>
<feature type="short sequence motif" description="Nuclear localization signal" evidence="1">
    <location>
        <begin position="151"/>
        <end position="167"/>
    </location>
</feature>
<feature type="short sequence motif" description="DEAH box">
    <location>
        <begin position="250"/>
        <end position="253"/>
    </location>
</feature>
<feature type="short sequence motif" description="Nuclear localization signal" evidence="1">
    <location>
        <begin position="871"/>
        <end position="877"/>
    </location>
</feature>
<feature type="short sequence motif" description="PIP-box">
    <location>
        <begin position="1178"/>
        <end position="1185"/>
    </location>
</feature>
<feature type="compositionally biased region" description="Low complexity" evidence="2">
    <location>
        <begin position="757"/>
        <end position="766"/>
    </location>
</feature>
<feature type="compositionally biased region" description="Basic and acidic residues" evidence="2">
    <location>
        <begin position="863"/>
        <end position="873"/>
    </location>
</feature>
<feature type="compositionally biased region" description="Polar residues" evidence="2">
    <location>
        <begin position="1176"/>
        <end position="1185"/>
    </location>
</feature>
<feature type="compositionally biased region" description="Low complexity" evidence="2">
    <location>
        <begin position="1200"/>
        <end position="1219"/>
    </location>
</feature>
<feature type="binding site" evidence="18">
    <location>
        <begin position="42"/>
        <end position="49"/>
    </location>
    <ligand>
        <name>ATP</name>
        <dbReference type="ChEBI" id="CHEBI:30616"/>
    </ligand>
</feature>
<feature type="binding site" evidence="1">
    <location>
        <position position="145"/>
    </location>
    <ligand>
        <name>[4Fe-4S] cluster</name>
        <dbReference type="ChEBI" id="CHEBI:49883"/>
    </ligand>
</feature>
<feature type="binding site" evidence="1">
    <location>
        <position position="163"/>
    </location>
    <ligand>
        <name>[4Fe-4S] cluster</name>
        <dbReference type="ChEBI" id="CHEBI:49883"/>
    </ligand>
</feature>
<feature type="binding site" evidence="1">
    <location>
        <position position="172"/>
    </location>
    <ligand>
        <name>[4Fe-4S] cluster</name>
        <dbReference type="ChEBI" id="CHEBI:49883"/>
    </ligand>
</feature>
<feature type="binding site" evidence="1">
    <location>
        <position position="207"/>
    </location>
    <ligand>
        <name>[4Fe-4S] cluster</name>
        <dbReference type="ChEBI" id="CHEBI:49883"/>
    </ligand>
</feature>
<feature type="splice variant" id="VSP_017093" description="In isoform 5." evidence="16">
    <location>
        <begin position="1"/>
        <end position="755"/>
    </location>
</feature>
<feature type="splice variant" id="VSP_036937" description="In isoform 9." evidence="16">
    <location>
        <begin position="1"/>
        <end position="223"/>
    </location>
</feature>
<feature type="splice variant" id="VSP_036938" description="In isoform 7." evidence="16">
    <original>Y</original>
    <variation>YRSRCRATLWVLETAPPRPTVLSPT</variation>
    <location>
        <position position="131"/>
    </location>
</feature>
<feature type="splice variant" id="VSP_036939" description="In isoform 8." evidence="16">
    <original>GRTAPDPKLTVSTAAAQQLDPQEHLNQGRPHLSPRPPPTGDPGSQPQWGSGVPRAGKQGQHAVSAYLADARRALGSAGCSQLLAALTAYKQDDDLDKVLAVLAALTTAKPEDFPLLHRFSMFVRPHHKQRFSQTCTDLTGRPYPGMEPPGPQEERLAVPPVLTHRAPQPGPSRSEKTGKTQSKISSFLRQRPAGTVGAGGEDAGPSQSSGPPHGPAASEWGL</original>
    <variation>ERRRIPS</variation>
    <location>
        <begin position="998"/>
        <end position="1219"/>
    </location>
</feature>
<feature type="splice variant" id="VSP_007076" description="In isoform 4." evidence="17">
    <original>RTAPDPKLTVSTAAAQQLDPQEHLN</original>
    <variation>NFPDALDQLCGSTSLHQEERRRIPS</variation>
    <location>
        <begin position="999"/>
        <end position="1023"/>
    </location>
</feature>
<feature type="splice variant" id="VSP_007077" description="In isoform 4." evidence="17">
    <location>
        <begin position="1024"/>
        <end position="1219"/>
    </location>
</feature>
<feature type="splice variant" id="VSP_036940" description="In isoform 1." evidence="14 15">
    <original>L</original>
    <variation>EPHGRDIAGQQATGAPGGPLSAGCVCQGCGAEDVVPFQCPACDFQRCQACWQRHLQASRMCPACHTASRKQSVMQVFWPEPHKDHEGAGGARPVAAVPGVGAACPAAGAGCTRSGRNTHLPLAGRRDRGAAGVCPVPPRHLCAAAVPPRQPHDVWPVSTAPLHAVLELPGALPLLQRPLRGA</variation>
    <location>
        <position position="1219"/>
    </location>
</feature>
<feature type="splice variant" id="VSP_017094" description="In isoform 5 and isoform 6." evidence="16">
    <original>L</original>
    <variation>EPHGRDIAGQQATGAPGGPLSAGCVCQGCGAEDVVPFQCPACDFQRCQACWQRHLQASRMCPACHTASRKQSVMQVFWPEPQ</variation>
    <location>
        <position position="1219"/>
    </location>
</feature>
<feature type="sequence variant" id="VAR_054970" description="In dbSNP:rs3848668." evidence="7">
    <original>N</original>
    <variation>S</variation>
    <location>
        <position position="124"/>
    </location>
</feature>
<feature type="sequence variant" id="VAR_069714" description="In DKCB5; severe form consistent with Hoyeraal-Hreidarsson syndrome; dbSNP:rs398123019." evidence="8">
    <original>E</original>
    <variation>K</variation>
    <location>
        <position position="251"/>
    </location>
</feature>
<feature type="sequence variant" id="VAR_073795" description="In PFBMFT3; dbSNP:rs786205700." evidence="13">
    <original>P</original>
    <variation>L</variation>
    <location>
        <position position="484"/>
    </location>
</feature>
<feature type="sequence variant" id="VAR_069715" description="In DKCB5; severe form consistent with Hoyeraal-Hreidarsson syndrome; dbSNP:rs370343781." evidence="8 11">
    <original>M</original>
    <variation>I</variation>
    <location>
        <position position="492"/>
    </location>
</feature>
<feature type="sequence variant" id="VAR_069716" description="In DKCB5; severe form consistent with Hoyeraal-Hreidarsson syndrome; dbSNP:rs398123051." evidence="7">
    <original>E</original>
    <variation>D</variation>
    <location>
        <position position="591"/>
    </location>
</feature>
<feature type="sequence variant" id="VAR_069717" description="In DKCA4; dbSNP:rs398123052." evidence="7">
    <original>A</original>
    <variation>T</variation>
    <location>
        <position position="621"/>
    </location>
</feature>
<feature type="sequence variant" id="VAR_073796" description="In PFBMFT3; dbSNP:rs1177091623." evidence="13">
    <original>P</original>
    <variation>L</variation>
    <location>
        <position position="647"/>
    </location>
</feature>
<feature type="sequence variant" id="VAR_069718" description="In dbSNP:rs35640778." evidence="7">
    <original>R</original>
    <variation>Q</variation>
    <location>
        <position position="684"/>
    </location>
</feature>
<feature type="sequence variant" id="VAR_069719" description="In DKCB5; severe form consistent with Hoyeraal-Hreidarsson syndrome; dbSNP:rs398123048." evidence="10">
    <original>I</original>
    <variation>M</variation>
    <location>
        <position position="699"/>
    </location>
</feature>
<feature type="sequence variant" id="VAR_069720" description="In DKCB5; severe form consistent with Hoyeraal-Hreidarsson syndrome." evidence="8">
    <original>L</original>
    <variation>R</variation>
    <location>
        <position position="710"/>
    </location>
</feature>
<feature type="sequence variant" id="VAR_069721" description="In DKCB5; severe form consistent with Hoyeraal-Hreidarsson syndrome; dbSNP:rs398123016." evidence="8">
    <original>G</original>
    <variation>V</variation>
    <location>
        <position position="739"/>
    </location>
</feature>
<feature type="sequence variant" id="VAR_069722" description="In DKCB5; severe form consistent with Hoyeraal-Hreidarsson syndrome; dbSNP:rs398123049." evidence="10">
    <original>V</original>
    <variation>M</variation>
    <location>
        <position position="745"/>
    </location>
</feature>
<feature type="sequence variant" id="VAR_069723" evidence="7">
    <original>Q</original>
    <variation>P</variation>
    <location>
        <position position="829"/>
    </location>
</feature>
<feature type="sequence variant" id="VAR_069724" description="In dbSNP:rs190887884." evidence="7">
    <original>G</original>
    <variation>D</variation>
    <location>
        <position position="849"/>
    </location>
</feature>
<feature type="sequence variant" id="VAR_069725" description="In DKCB5; severe form consistent with Hoyeraal-Hreidarsson syndrome." evidence="8">
    <original>K</original>
    <variation>E</variation>
    <location>
        <position position="897"/>
    </location>
</feature>
<feature type="sequence variant" id="VAR_069726" description="In dbSNP:rs61736615." evidence="4 7">
    <original>A</original>
    <variation>T</variation>
    <location>
        <position position="929"/>
    </location>
</feature>
<feature type="sequence variant" id="VAR_069727" description="In DKCB5; severe form consistent with Hoyeraal-Hreidarsson syndrome; dbSNP:rs398123018." evidence="8">
    <original>R</original>
    <variation>W</variation>
    <location>
        <position position="957"/>
    </location>
</feature>
<feature type="sequence variant" id="VAR_069728" description="In DKCB5; severe form consistent with Hoyeraal-Hreidarsson syndrome; dbSNP:rs1470145133." evidence="8">
    <original>F</original>
    <variation>L</variation>
    <location>
        <position position="964"/>
    </location>
</feature>
<feature type="sequence variant" id="VAR_069729" description="In dbSNP:rs115610405." evidence="7">
    <original>P</original>
    <variation>H</variation>
    <location>
        <position position="1034"/>
    </location>
</feature>
<feature type="sequence variant" id="VAR_054971" description="In dbSNP:rs3208008." evidence="3 4 7">
    <original>Q</original>
    <variation>H</variation>
    <location>
        <position position="1042"/>
    </location>
</feature>
<feature type="sequence variant" id="VAR_069730" description="In dbSNP:rs115303435." evidence="7">
    <original>A</original>
    <variation>T</variation>
    <location>
        <position position="1059"/>
    </location>
</feature>
<feature type="sequence variant" id="VAR_073797" description="In PFBMFT3; dbSNP:rs786205702." evidence="13">
    <original>H</original>
    <variation>P</variation>
    <location>
        <position position="1124"/>
    </location>
</feature>
<feature type="mutagenesis site" description="Abolishes ATPase activity." evidence="5">
    <original>K</original>
    <variation>R</variation>
    <location>
        <position position="48"/>
    </location>
</feature>
<feature type="sequence conflict" description="In Ref. 5; BAG63785." evidence="18" ref="5">
    <original>E</original>
    <variation>G</variation>
    <location>
        <position position="41"/>
    </location>
</feature>
<feature type="sequence conflict" description="In Ref. 5; BAG61337." evidence="18" ref="5">
    <original>K</original>
    <variation>R</variation>
    <location>
        <position position="48"/>
    </location>
</feature>
<feature type="sequence conflict" description="In Ref. 5; BAG63785." evidence="18" ref="5">
    <original>A</original>
    <variation>V</variation>
    <location>
        <position position="845"/>
    </location>
</feature>
<feature type="sequence conflict" description="In Ref. 5; BAG61337." evidence="18" ref="5">
    <original>R</original>
    <variation>Q</variation>
    <location>
        <position position="986"/>
    </location>
</feature>
<feature type="helix" evidence="19">
    <location>
        <begin position="1059"/>
        <end position="1089"/>
    </location>
</feature>
<feature type="helix" evidence="19">
    <location>
        <begin position="1092"/>
        <end position="1103"/>
    </location>
</feature>
<feature type="strand" evidence="19">
    <location>
        <begin position="1104"/>
        <end position="1106"/>
    </location>
</feature>
<feature type="helix" evidence="19">
    <location>
        <begin position="1107"/>
        <end position="1109"/>
    </location>
</feature>
<feature type="helix" evidence="19">
    <location>
        <begin position="1110"/>
        <end position="1115"/>
    </location>
</feature>
<feature type="helix" evidence="19">
    <location>
        <begin position="1116"/>
        <end position="1119"/>
    </location>
</feature>
<feature type="helix" evidence="19">
    <location>
        <begin position="1122"/>
        <end position="1124"/>
    </location>
</feature>
<feature type="helix" evidence="19">
    <location>
        <begin position="1125"/>
        <end position="1136"/>
    </location>
</feature>
<feature type="sequence variant" id="VAR_082827" description="In DKCB5, severe form consistent with Hoyeraal-Hreidarsson syndrome." evidence="10">
    <original>C</original>
    <variation>R</variation>
    <location sequence="Q9NZ71-2">
        <position position="1244"/>
    </location>
</feature>
<feature type="sequence conflict" description="In Ref. 2; BAA83040." evidence="18" ref="2">
    <original>C</original>
    <variation>R</variation>
    <location sequence="Q9NZ71-2">
        <position position="1352"/>
    </location>
</feature>
<feature type="sequence variant" id="VAR_082828" description="In DKCB5, severe form consistent with Hoyeraal-Hreidarsson syndrome." evidence="10">
    <original>C</original>
    <variation>R</variation>
    <location sequence="Q9NZ71-5">
        <position position="489"/>
    </location>
</feature>
<feature type="sequence variant" id="VAR_082829" description="In DKCB5, abolishes activity." evidence="8 12">
    <original>R</original>
    <variation>H</variation>
    <location sequence="Q9NZ71-5">
        <position position="509"/>
    </location>
</feature>
<feature type="sequence variant" id="VAR_082830" description="In DKCB5, severe form consistent with Hoyeraal-Hreidarsson syndrome; dbSNP:rs587777037." evidence="10">
    <original>C</original>
    <variation>R</variation>
    <location sequence="Q9NZ71-6">
        <position position="1244"/>
    </location>
</feature>
<feature type="sequence variant" id="VAR_082831" description="In DKCB5, abolishes activity; dbSNP:rs201540674." evidence="8">
    <original>R</original>
    <variation>H</variation>
    <location sequence="Q9NZ71-6">
        <position position="1264"/>
    </location>
</feature>
<comment type="function">
    <text evidence="1 5 8 12">A probable ATP-dependent DNA helicase implicated in telomere-length regulation, DNA repair and the maintenance of genomic stability. Acts as an anti-recombinase to counteract toxic recombination and limit crossover during meiosis. Regulates meiotic recombination and crossover homeostasis by physically dissociating strand invasion events and thereby promotes noncrossover repair by meiotic synthesis dependent strand annealing (SDSA) as well as disassembly of D loop recombination intermediates. Also disassembles T loops and prevents telomere fragility by counteracting telomeric G4-DNA structures, which together ensure the dynamics and stability of the telomere.</text>
</comment>
<comment type="catalytic activity">
    <reaction evidence="1 5">
        <text>ATP + H2O = ADP + phosphate + H(+)</text>
        <dbReference type="Rhea" id="RHEA:13065"/>
        <dbReference type="ChEBI" id="CHEBI:15377"/>
        <dbReference type="ChEBI" id="CHEBI:15378"/>
        <dbReference type="ChEBI" id="CHEBI:30616"/>
        <dbReference type="ChEBI" id="CHEBI:43474"/>
        <dbReference type="ChEBI" id="CHEBI:456216"/>
    </reaction>
</comment>
<comment type="subunit">
    <text evidence="1 6 9 11">Interacts with TERF1 (PubMed:23959892). Interacts (via PIP-box) with PCNA; the interaction is direct and essential for suppressing telomere fragility. Interacts with MMS19; the interaction mediates the association of RTEL1 with the cytosolic iron-sulfur protein assembly (CIA) complex (PubMed:22678361, PubMed:23585563).</text>
</comment>
<comment type="interaction">
    <interactant intactId="EBI-2859587">
        <id>Q9NZ71</id>
    </interactant>
    <interactant intactId="EBI-1044169">
        <id>Q96T76</id>
        <label>MMS19</label>
    </interactant>
    <organismsDiffer>false</organismsDiffer>
    <experiments>4</experiments>
</comment>
<comment type="subcellular location">
    <subcellularLocation>
        <location evidence="1 9">Nucleus</location>
    </subcellularLocation>
    <text evidence="1">Colocalizes with PCNA within the replication foci in S-phase cells.</text>
</comment>
<comment type="alternative products">
    <event type="alternative splicing"/>
    <isoform>
        <id>Q9NZ71-1</id>
        <name>2</name>
        <sequence type="displayed"/>
    </isoform>
    <isoform>
        <id>Q9NZ71-2</id>
        <name>1</name>
        <sequence type="described" ref="VSP_036940"/>
    </isoform>
    <isoform>
        <id>Q9NZ71-4</id>
        <name>4</name>
        <sequence type="described" ref="VSP_007076 VSP_007077"/>
    </isoform>
    <isoform>
        <id>Q9NZ71-5</id>
        <name>5</name>
        <sequence type="described" ref="VSP_017093 VSP_017094"/>
    </isoform>
    <isoform>
        <id>Q9NZ71-6</id>
        <name>6</name>
        <sequence type="described" ref="VSP_017094"/>
    </isoform>
    <isoform>
        <id>Q9NZ71-7</id>
        <name>7</name>
        <sequence type="described" ref="VSP_036938"/>
    </isoform>
    <isoform>
        <id>Q9NZ71-8</id>
        <name>8</name>
        <sequence type="described" ref="VSP_036939"/>
    </isoform>
    <isoform>
        <id>Q9NZ71-9</id>
        <name>9</name>
        <sequence type="described" ref="VSP_036937"/>
    </isoform>
    <text>Additional isoforms seem to exist.</text>
</comment>
<comment type="domain">
    <text evidence="1">The PIP-box (PCNA interacting peptide) motif mediates the interaction with PCNA and localization to replication foci.</text>
</comment>
<comment type="disease" evidence="7 8 10 11 12">
    <disease id="DI-03755">
        <name>Dyskeratosis congenita, autosomal recessive, 5</name>
        <acronym>DKCB5</acronym>
        <description>A form of dyskeratosis congenita, a rare multisystem disorder caused by defective telomere maintenance. It is characterized by progressive bone marrow failure, and the clinical triad of reticulated skin hyperpigmentation, nail dystrophy, and mucosal leukoplakia. Common but variable features include premature graying, aplastic anemia, low platelets, osteoporosis, pulmonary fibrosis, and liver fibrosis among others. Early mortality is often associated with bone marrow failure, infections, fatal pulmonary complications, or malignancy. DKCB5 is characterized by onset of bone marrow failure and immunodeficiency in early childhood. Most patients also have growth and developmental delay and cerebellar hypoplasia, consistent with a clinical diagnosis of Hoyeraal-Hreidarsson syndrome.</description>
        <dbReference type="MIM" id="615190"/>
    </disease>
    <text evidence="7">The disease is caused by variants affecting the gene represented in this entry. RTEL1 mutations have also been found in patients with a dyskeratosis congenita-like phenotype consisting of one feature of dyskeratosis congenita and short telomeres, in the absence of the typical DKC diagnostic triad (PubMed:23329068).</text>
</comment>
<comment type="disease" evidence="7">
    <disease id="DI-03889">
        <name>Dyskeratosis congenita, autosomal dominant, 4</name>
        <acronym>DKCA4</acronym>
        <description>A rare multisystem disorder caused by defective telomere maintenance. It is characterized by progressive bone marrow failure, and the clinical triad of reticulated skin hyperpigmentation, nail dystrophy, and mucosal leukoplakia. Common but variable features include premature graying, aplastic anemia, low platelets, osteoporosis, pulmonary fibrosis, and liver fibrosis among others. Early mortality is often associated with bone marrow failure, infections, fatal pulmonary complications, or malignancy.</description>
        <dbReference type="MIM" id="615190"/>
    </disease>
    <text>The disease is caused by variants affecting the gene represented in this entry.</text>
</comment>
<comment type="disease" evidence="13">
    <disease id="DI-04431">
        <name>Pulmonary fibrosis, and/or bone marrow failure syndrome, telomere-related, 3</name>
        <acronym>PFBMFT3</acronym>
        <description>An autosomal dominant disease associated with shortened telomeres. Pulmonary fibrosis is the most common manifestation. Other manifestations include aplastic anemia due to bone marrow failure, hepatic fibrosis, and increased cancer risk, particularly myelodysplastic syndrome and acute myeloid leukemia. Phenotype, age at onset, and severity are determined by telomere length.</description>
        <dbReference type="MIM" id="616373"/>
    </disease>
    <text>The disease is caused by variants affecting the gene represented in this entry.</text>
</comment>
<comment type="miscellaneous">
    <text>Amplified in gastric tumors.</text>
</comment>
<comment type="miscellaneous">
    <molecule>Isoform 1</molecule>
    <text evidence="18">Variant in position: 1264:R-&gt;H (in DKCB5), abolishes activity.</text>
</comment>
<comment type="similarity">
    <text evidence="1">Belongs to the helicase family. RAD3/XPD subfamily.</text>
</comment>
<dbReference type="EC" id="5.6.2.-" evidence="1"/>
<dbReference type="EMBL" id="AF217795">
    <property type="protein sequence ID" value="AAF33687.1"/>
    <property type="molecule type" value="mRNA"/>
</dbReference>
<dbReference type="EMBL" id="AF217796">
    <property type="protein sequence ID" value="AAF35243.1"/>
    <property type="molecule type" value="Genomic_DNA"/>
</dbReference>
<dbReference type="EMBL" id="AB029011">
    <property type="protein sequence ID" value="BAA83040.3"/>
    <property type="molecule type" value="mRNA"/>
</dbReference>
<dbReference type="EMBL" id="AK000485">
    <property type="protein sequence ID" value="BAA91197.1"/>
    <property type="molecule type" value="mRNA"/>
</dbReference>
<dbReference type="EMBL" id="AK302508">
    <property type="protein sequence ID" value="BAG63785.1"/>
    <property type="molecule type" value="mRNA"/>
</dbReference>
<dbReference type="EMBL" id="AK299332">
    <property type="protein sequence ID" value="BAG61337.1"/>
    <property type="molecule type" value="mRNA"/>
</dbReference>
<dbReference type="EMBL" id="AK304798">
    <property type="protein sequence ID" value="BAG65548.1"/>
    <property type="molecule type" value="mRNA"/>
</dbReference>
<dbReference type="EMBL" id="AL353715">
    <property type="status" value="NOT_ANNOTATED_CDS"/>
    <property type="molecule type" value="Genomic_DNA"/>
</dbReference>
<dbReference type="EMBL" id="CH471077">
    <property type="protein sequence ID" value="EAW75238.1"/>
    <property type="molecule type" value="Genomic_DNA"/>
</dbReference>
<dbReference type="EMBL" id="CH471077">
    <property type="protein sequence ID" value="EAW75239.1"/>
    <property type="molecule type" value="Genomic_DNA"/>
</dbReference>
<dbReference type="EMBL" id="CH471077">
    <property type="protein sequence ID" value="EAW75240.1"/>
    <property type="molecule type" value="Genomic_DNA"/>
</dbReference>
<dbReference type="EMBL" id="CH471077">
    <property type="protein sequence ID" value="EAW75241.1"/>
    <property type="molecule type" value="Genomic_DNA"/>
</dbReference>
<dbReference type="EMBL" id="CH471077">
    <property type="protein sequence ID" value="EAW75245.1"/>
    <property type="molecule type" value="Genomic_DNA"/>
</dbReference>
<dbReference type="EMBL" id="AL080127">
    <property type="protein sequence ID" value="CAB45725.1"/>
    <property type="molecule type" value="mRNA"/>
</dbReference>
<dbReference type="CCDS" id="CCDS13530.3">
    <molecule id="Q9NZ71-7"/>
</dbReference>
<dbReference type="CCDS" id="CCDS13531.1">
    <molecule id="Q9NZ71-1"/>
</dbReference>
<dbReference type="CCDS" id="CCDS63331.1">
    <molecule id="Q9NZ71-6"/>
</dbReference>
<dbReference type="CCDS" id="CCDS74751.1">
    <molecule id="Q9NZ71-9"/>
</dbReference>
<dbReference type="PIR" id="T12516">
    <property type="entry name" value="T12516"/>
</dbReference>
<dbReference type="PIR" id="T45294">
    <property type="entry name" value="T45294"/>
</dbReference>
<dbReference type="RefSeq" id="NP_001269938.1">
    <molecule id="Q9NZ71-6"/>
    <property type="nucleotide sequence ID" value="NM_001283009.2"/>
</dbReference>
<dbReference type="RefSeq" id="NP_001269939.1">
    <molecule id="Q9NZ71-9"/>
    <property type="nucleotide sequence ID" value="NM_001283010.1"/>
</dbReference>
<dbReference type="RefSeq" id="NP_057518.1">
    <molecule id="Q9NZ71-1"/>
    <property type="nucleotide sequence ID" value="NM_016434.4"/>
</dbReference>
<dbReference type="RefSeq" id="NP_116575.3">
    <molecule id="Q9NZ71-7"/>
    <property type="nucleotide sequence ID" value="NM_032957.5"/>
</dbReference>
<dbReference type="PDB" id="7WU8">
    <property type="method" value="X-ray"/>
    <property type="resolution" value="1.60 A"/>
    <property type="chains" value="A/B/C/D/E/F/G=1056-1140"/>
</dbReference>
<dbReference type="PDB" id="8P8H">
    <property type="method" value="X-ray"/>
    <property type="resolution" value="2.30 A"/>
    <property type="chains" value="A/B/C/D/E/F/G=1053-1147"/>
</dbReference>
<dbReference type="PDB" id="8YA8">
    <property type="method" value="X-ray"/>
    <property type="resolution" value="2.85 A"/>
    <property type="chains" value="A/B/C/D/E/F/G=1048-1137"/>
</dbReference>
<dbReference type="PDBsum" id="7WU8"/>
<dbReference type="PDBsum" id="8P8H"/>
<dbReference type="PDBsum" id="8YA8"/>
<dbReference type="SASBDB" id="Q9NZ71"/>
<dbReference type="SMR" id="Q9NZ71"/>
<dbReference type="BioGRID" id="119711">
    <property type="interactions" value="115"/>
</dbReference>
<dbReference type="FunCoup" id="Q9NZ71">
    <property type="interactions" value="2677"/>
</dbReference>
<dbReference type="IntAct" id="Q9NZ71">
    <property type="interactions" value="58"/>
</dbReference>
<dbReference type="STRING" id="9606.ENSP00000353332"/>
<dbReference type="GlyGen" id="Q9NZ71">
    <property type="glycosylation" value="1 site, 1 O-linked glycan (1 site)"/>
</dbReference>
<dbReference type="iPTMnet" id="Q9NZ71"/>
<dbReference type="PhosphoSitePlus" id="Q9NZ71"/>
<dbReference type="BioMuta" id="RTEL1"/>
<dbReference type="DMDM" id="229462743"/>
<dbReference type="jPOST" id="Q9NZ71"/>
<dbReference type="MassIVE" id="Q9NZ71"/>
<dbReference type="PaxDb" id="9606-ENSP00000353332"/>
<dbReference type="PeptideAtlas" id="Q9NZ71"/>
<dbReference type="ProteomicsDB" id="83330">
    <molecule id="Q9NZ71-1"/>
</dbReference>
<dbReference type="ProteomicsDB" id="83331">
    <molecule id="Q9NZ71-2"/>
</dbReference>
<dbReference type="ProteomicsDB" id="83332">
    <molecule id="Q9NZ71-4"/>
</dbReference>
<dbReference type="ProteomicsDB" id="83333">
    <molecule id="Q9NZ71-5"/>
</dbReference>
<dbReference type="ProteomicsDB" id="83334">
    <molecule id="Q9NZ71-6"/>
</dbReference>
<dbReference type="ProteomicsDB" id="83335">
    <molecule id="Q9NZ71-7"/>
</dbReference>
<dbReference type="ProteomicsDB" id="83336">
    <molecule id="Q9NZ71-8"/>
</dbReference>
<dbReference type="ProteomicsDB" id="83337">
    <molecule id="Q9NZ71-9"/>
</dbReference>
<dbReference type="Pumba" id="Q9NZ71"/>
<dbReference type="Antibodypedia" id="58405">
    <property type="antibodies" value="144 antibodies from 24 providers"/>
</dbReference>
<dbReference type="DNASU" id="51750"/>
<dbReference type="Ensembl" id="ENST00000318100.9">
    <molecule id="Q9NZ71-9"/>
    <property type="protein sequence ID" value="ENSP00000322287.5"/>
    <property type="gene ID" value="ENSG00000258366.12"/>
</dbReference>
<dbReference type="Ensembl" id="ENST00000360203.11">
    <molecule id="Q9NZ71-6"/>
    <property type="protein sequence ID" value="ENSP00000353332.5"/>
    <property type="gene ID" value="ENSG00000258366.12"/>
</dbReference>
<dbReference type="Ensembl" id="ENST00000370018.7">
    <molecule id="Q9NZ71-1"/>
    <property type="protein sequence ID" value="ENSP00000359035.3"/>
    <property type="gene ID" value="ENSG00000258366.12"/>
</dbReference>
<dbReference type="Ensembl" id="ENST00000482936.6">
    <molecule id="Q9NZ71-8"/>
    <property type="protein sequence ID" value="ENSP00000457868.2"/>
    <property type="gene ID" value="ENSG00000258366.12"/>
</dbReference>
<dbReference type="Ensembl" id="ENST00000508582.7">
    <molecule id="Q9NZ71-7"/>
    <property type="protein sequence ID" value="ENSP00000424307.2"/>
    <property type="gene ID" value="ENSG00000258366.12"/>
</dbReference>
<dbReference type="GeneID" id="51750"/>
<dbReference type="KEGG" id="hsa:51750"/>
<dbReference type="MANE-Select" id="ENST00000360203.11">
    <molecule id="Q9NZ71-6"/>
    <property type="protein sequence ID" value="ENSP00000353332.5"/>
    <property type="RefSeq nucleotide sequence ID" value="NM_001283009.2"/>
    <property type="RefSeq protein sequence ID" value="NP_001269938.1"/>
</dbReference>
<dbReference type="UCSC" id="uc002yfu.3">
    <molecule id="Q9NZ71-1"/>
    <property type="organism name" value="human"/>
</dbReference>
<dbReference type="AGR" id="HGNC:15888"/>
<dbReference type="CTD" id="51750"/>
<dbReference type="DisGeNET" id="51750"/>
<dbReference type="GeneCards" id="RTEL1"/>
<dbReference type="GeneReviews" id="RTEL1"/>
<dbReference type="HGNC" id="HGNC:15888">
    <property type="gene designation" value="RTEL1"/>
</dbReference>
<dbReference type="HPA" id="ENSG00000258366">
    <property type="expression patterns" value="Low tissue specificity"/>
</dbReference>
<dbReference type="MalaCards" id="RTEL1"/>
<dbReference type="MIM" id="608833">
    <property type="type" value="gene"/>
</dbReference>
<dbReference type="MIM" id="615190">
    <property type="type" value="phenotype"/>
</dbReference>
<dbReference type="MIM" id="616373">
    <property type="type" value="phenotype"/>
</dbReference>
<dbReference type="neXtProt" id="NX_Q9NZ71"/>
<dbReference type="OpenTargets" id="ENSG00000258366"/>
<dbReference type="Orphanet" id="1775">
    <property type="disease" value="Dyskeratosis congenita"/>
</dbReference>
<dbReference type="Orphanet" id="3322">
    <property type="disease" value="Hoyeraal-Hreidarsson syndrome"/>
</dbReference>
<dbReference type="Orphanet" id="2032">
    <property type="disease" value="Idiopathic pulmonary fibrosis"/>
</dbReference>
<dbReference type="PharmGKB" id="PA134915625"/>
<dbReference type="VEuPathDB" id="HostDB:ENSG00000258366"/>
<dbReference type="eggNOG" id="KOG1132">
    <property type="taxonomic scope" value="Eukaryota"/>
</dbReference>
<dbReference type="GeneTree" id="ENSGT00950000182970"/>
<dbReference type="HOGENOM" id="CLU_006515_4_0_1"/>
<dbReference type="InParanoid" id="Q9NZ71"/>
<dbReference type="OMA" id="NDTACIK"/>
<dbReference type="PAN-GO" id="Q9NZ71">
    <property type="GO annotations" value="9 GO annotations based on evolutionary models"/>
</dbReference>
<dbReference type="PhylomeDB" id="Q9NZ71"/>
<dbReference type="PathwayCommons" id="Q9NZ71"/>
<dbReference type="Reactome" id="R-HSA-171319">
    <property type="pathway name" value="Telomere Extension By Telomerase"/>
</dbReference>
<dbReference type="Reactome" id="R-HSA-2564830">
    <property type="pathway name" value="Cytosolic iron-sulfur cluster assembly"/>
</dbReference>
<dbReference type="Reactome" id="R-HSA-5693554">
    <property type="pathway name" value="Resolution of D-loop Structures through Synthesis-Dependent Strand Annealing (SDSA)"/>
</dbReference>
<dbReference type="SignaLink" id="Q9NZ71"/>
<dbReference type="BioGRID-ORCS" id="51750">
    <property type="hits" value="457 hits in 1160 CRISPR screens"/>
</dbReference>
<dbReference type="GenomeRNAi" id="51750"/>
<dbReference type="Pharos" id="Q9NZ71">
    <property type="development level" value="Tbio"/>
</dbReference>
<dbReference type="PRO" id="PR:Q9NZ71"/>
<dbReference type="Proteomes" id="UP000005640">
    <property type="component" value="Chromosome 20"/>
</dbReference>
<dbReference type="RNAct" id="Q9NZ71">
    <property type="molecule type" value="protein"/>
</dbReference>
<dbReference type="Bgee" id="ENSG00000258366">
    <property type="expression patterns" value="Expressed in sural nerve and 95 other cell types or tissues"/>
</dbReference>
<dbReference type="ExpressionAtlas" id="Q9NZ71">
    <property type="expression patterns" value="baseline and differential"/>
</dbReference>
<dbReference type="GO" id="GO:0000781">
    <property type="term" value="C:chromosome, telomeric region"/>
    <property type="evidence" value="ECO:0000250"/>
    <property type="project" value="BHF-UCL"/>
</dbReference>
<dbReference type="GO" id="GO:0031965">
    <property type="term" value="C:nuclear membrane"/>
    <property type="evidence" value="ECO:0000314"/>
    <property type="project" value="HPA"/>
</dbReference>
<dbReference type="GO" id="GO:0016607">
    <property type="term" value="C:nuclear speck"/>
    <property type="evidence" value="ECO:0000314"/>
    <property type="project" value="HPA"/>
</dbReference>
<dbReference type="GO" id="GO:0005654">
    <property type="term" value="C:nucleoplasm"/>
    <property type="evidence" value="ECO:0000314"/>
    <property type="project" value="HPA"/>
</dbReference>
<dbReference type="GO" id="GO:0005634">
    <property type="term" value="C:nucleus"/>
    <property type="evidence" value="ECO:0000314"/>
    <property type="project" value="UniProtKB"/>
</dbReference>
<dbReference type="GO" id="GO:0051539">
    <property type="term" value="F:4 iron, 4 sulfur cluster binding"/>
    <property type="evidence" value="ECO:0007669"/>
    <property type="project" value="UniProtKB-UniRule"/>
</dbReference>
<dbReference type="GO" id="GO:0005524">
    <property type="term" value="F:ATP binding"/>
    <property type="evidence" value="ECO:0000315"/>
    <property type="project" value="UniProtKB"/>
</dbReference>
<dbReference type="GO" id="GO:0016887">
    <property type="term" value="F:ATP hydrolysis activity"/>
    <property type="evidence" value="ECO:0007669"/>
    <property type="project" value="RHEA"/>
</dbReference>
<dbReference type="GO" id="GO:0003677">
    <property type="term" value="F:DNA binding"/>
    <property type="evidence" value="ECO:0007669"/>
    <property type="project" value="UniProtKB-UniRule"/>
</dbReference>
<dbReference type="GO" id="GO:0003678">
    <property type="term" value="F:DNA helicase activity"/>
    <property type="evidence" value="ECO:0000315"/>
    <property type="project" value="UniProtKB"/>
</dbReference>
<dbReference type="GO" id="GO:0070182">
    <property type="term" value="F:DNA polymerase binding"/>
    <property type="evidence" value="ECO:0000318"/>
    <property type="project" value="GO_Central"/>
</dbReference>
<dbReference type="GO" id="GO:0046872">
    <property type="term" value="F:metal ion binding"/>
    <property type="evidence" value="ECO:0007669"/>
    <property type="project" value="UniProtKB-UniRule"/>
</dbReference>
<dbReference type="GO" id="GO:0006281">
    <property type="term" value="P:DNA repair"/>
    <property type="evidence" value="ECO:0007669"/>
    <property type="project" value="UniProtKB-UniRule"/>
</dbReference>
<dbReference type="GO" id="GO:0000732">
    <property type="term" value="P:DNA strand displacement"/>
    <property type="evidence" value="ECO:0000250"/>
    <property type="project" value="BHF-UCL"/>
</dbReference>
<dbReference type="GO" id="GO:1902990">
    <property type="term" value="P:mitotic telomere maintenance via semi-conservative replication"/>
    <property type="evidence" value="ECO:0000250"/>
    <property type="project" value="BHF-UCL"/>
</dbReference>
<dbReference type="GO" id="GO:0045910">
    <property type="term" value="P:negative regulation of DNA recombination"/>
    <property type="evidence" value="ECO:0000250"/>
    <property type="project" value="BHF-UCL"/>
</dbReference>
<dbReference type="GO" id="GO:1904430">
    <property type="term" value="P:negative regulation of t-circle formation"/>
    <property type="evidence" value="ECO:0000315"/>
    <property type="project" value="BHF-UCL"/>
</dbReference>
<dbReference type="GO" id="GO:1904506">
    <property type="term" value="P:negative regulation of telomere maintenance in response to DNA damage"/>
    <property type="evidence" value="ECO:0000250"/>
    <property type="project" value="BHF-UCL"/>
</dbReference>
<dbReference type="GO" id="GO:1904355">
    <property type="term" value="P:positive regulation of telomere capping"/>
    <property type="evidence" value="ECO:0000315"/>
    <property type="project" value="BHF-UCL"/>
</dbReference>
<dbReference type="GO" id="GO:0032206">
    <property type="term" value="P:positive regulation of telomere maintenance"/>
    <property type="evidence" value="ECO:0000250"/>
    <property type="project" value="BHF-UCL"/>
</dbReference>
<dbReference type="GO" id="GO:1904358">
    <property type="term" value="P:positive regulation of telomere maintenance via telomere lengthening"/>
    <property type="evidence" value="ECO:0000315"/>
    <property type="project" value="BHF-UCL"/>
</dbReference>
<dbReference type="GO" id="GO:1904535">
    <property type="term" value="P:positive regulation of telomeric loop disassembly"/>
    <property type="evidence" value="ECO:0000250"/>
    <property type="project" value="BHF-UCL"/>
</dbReference>
<dbReference type="GO" id="GO:0010569">
    <property type="term" value="P:regulation of double-strand break repair via homologous recombination"/>
    <property type="evidence" value="ECO:0000315"/>
    <property type="project" value="UniProtKB"/>
</dbReference>
<dbReference type="GO" id="GO:0031297">
    <property type="term" value="P:replication fork processing"/>
    <property type="evidence" value="ECO:0000250"/>
    <property type="project" value="BHF-UCL"/>
</dbReference>
<dbReference type="GO" id="GO:0000723">
    <property type="term" value="P:telomere maintenance"/>
    <property type="evidence" value="ECO:0000315"/>
    <property type="project" value="UniProtKB"/>
</dbReference>
<dbReference type="GO" id="GO:0043247">
    <property type="term" value="P:telomere maintenance in response to DNA damage"/>
    <property type="evidence" value="ECO:0000250"/>
    <property type="project" value="BHF-UCL"/>
</dbReference>
<dbReference type="GO" id="GO:0090657">
    <property type="term" value="P:telomeric loop disassembly"/>
    <property type="evidence" value="ECO:0000315"/>
    <property type="project" value="BHF-UCL"/>
</dbReference>
<dbReference type="CDD" id="cd17970">
    <property type="entry name" value="DEAHc_FancJ"/>
    <property type="match status" value="1"/>
</dbReference>
<dbReference type="CDD" id="cd13932">
    <property type="entry name" value="HN_RTEL1"/>
    <property type="match status" value="2"/>
</dbReference>
<dbReference type="CDD" id="cd18788">
    <property type="entry name" value="SF2_C_XPD"/>
    <property type="match status" value="1"/>
</dbReference>
<dbReference type="FunFam" id="1.20.1160.20:FF:000006">
    <property type="entry name" value="Regulator of telomere elongation helicase 1"/>
    <property type="match status" value="1"/>
</dbReference>
<dbReference type="FunFam" id="1.20.1160.20:FF:000009">
    <property type="entry name" value="Regulator of telomere elongation helicase 1"/>
    <property type="match status" value="1"/>
</dbReference>
<dbReference type="FunFam" id="3.40.50.300:FF:000431">
    <property type="entry name" value="Regulator of telomere elongation helicase 1"/>
    <property type="match status" value="1"/>
</dbReference>
<dbReference type="FunFam" id="3.40.50.300:FF:000691">
    <property type="entry name" value="Regulator of telomere elongation helicase 1"/>
    <property type="match status" value="1"/>
</dbReference>
<dbReference type="Gene3D" id="1.20.1160.20">
    <property type="match status" value="2"/>
</dbReference>
<dbReference type="Gene3D" id="3.40.50.300">
    <property type="entry name" value="P-loop containing nucleotide triphosphate hydrolases"/>
    <property type="match status" value="2"/>
</dbReference>
<dbReference type="HAMAP" id="MF_03065">
    <property type="entry name" value="RTEL1"/>
    <property type="match status" value="1"/>
</dbReference>
<dbReference type="InterPro" id="IPR006555">
    <property type="entry name" value="ATP-dep_Helicase_C"/>
</dbReference>
<dbReference type="InterPro" id="IPR045028">
    <property type="entry name" value="DinG/Rad3-like"/>
</dbReference>
<dbReference type="InterPro" id="IPR014013">
    <property type="entry name" value="Helic_SF1/SF2_ATP-bd_DinG/Rad3"/>
</dbReference>
<dbReference type="InterPro" id="IPR006554">
    <property type="entry name" value="Helicase-like_DEXD_c2"/>
</dbReference>
<dbReference type="InterPro" id="IPR049909">
    <property type="entry name" value="HHD_RTEL1"/>
</dbReference>
<dbReference type="InterPro" id="IPR027417">
    <property type="entry name" value="P-loop_NTPase"/>
</dbReference>
<dbReference type="InterPro" id="IPR010614">
    <property type="entry name" value="RAD3-like_helicase_DEAD"/>
</dbReference>
<dbReference type="InterPro" id="IPR013020">
    <property type="entry name" value="Rad3/Chl1-like"/>
</dbReference>
<dbReference type="InterPro" id="IPR030845">
    <property type="entry name" value="RTEL1"/>
</dbReference>
<dbReference type="NCBIfam" id="TIGR00604">
    <property type="entry name" value="rad3"/>
    <property type="match status" value="1"/>
</dbReference>
<dbReference type="PANTHER" id="PTHR11472">
    <property type="entry name" value="DNA REPAIR DEAD HELICASE RAD3/XP-D SUBFAMILY MEMBER"/>
    <property type="match status" value="1"/>
</dbReference>
<dbReference type="PANTHER" id="PTHR11472:SF62">
    <property type="entry name" value="REGULATOR OF TELOMERE ELONGATION HELICASE 1"/>
    <property type="match status" value="1"/>
</dbReference>
<dbReference type="Pfam" id="PF23109">
    <property type="entry name" value="ARCH_RTEL1"/>
    <property type="match status" value="1"/>
</dbReference>
<dbReference type="Pfam" id="PF06733">
    <property type="entry name" value="DEAD_2"/>
    <property type="match status" value="1"/>
</dbReference>
<dbReference type="Pfam" id="PF13307">
    <property type="entry name" value="Helicase_C_2"/>
    <property type="match status" value="1"/>
</dbReference>
<dbReference type="Pfam" id="PF23116">
    <property type="entry name" value="HHD_RTEL1"/>
    <property type="match status" value="2"/>
</dbReference>
<dbReference type="SMART" id="SM00488">
    <property type="entry name" value="DEXDc2"/>
    <property type="match status" value="1"/>
</dbReference>
<dbReference type="SMART" id="SM00491">
    <property type="entry name" value="HELICc2"/>
    <property type="match status" value="1"/>
</dbReference>
<dbReference type="SUPFAM" id="SSF52540">
    <property type="entry name" value="P-loop containing nucleoside triphosphate hydrolases"/>
    <property type="match status" value="2"/>
</dbReference>
<dbReference type="PROSITE" id="PS51193">
    <property type="entry name" value="HELICASE_ATP_BIND_2"/>
    <property type="match status" value="1"/>
</dbReference>
<organism>
    <name type="scientific">Homo sapiens</name>
    <name type="common">Human</name>
    <dbReference type="NCBI Taxonomy" id="9606"/>
    <lineage>
        <taxon>Eukaryota</taxon>
        <taxon>Metazoa</taxon>
        <taxon>Chordata</taxon>
        <taxon>Craniata</taxon>
        <taxon>Vertebrata</taxon>
        <taxon>Euteleostomi</taxon>
        <taxon>Mammalia</taxon>
        <taxon>Eutheria</taxon>
        <taxon>Euarchontoglires</taxon>
        <taxon>Primates</taxon>
        <taxon>Haplorrhini</taxon>
        <taxon>Catarrhini</taxon>
        <taxon>Hominidae</taxon>
        <taxon>Homo</taxon>
    </lineage>
</organism>
<name>RTEL1_HUMAN</name>
<proteinExistence type="evidence at protein level"/>
<accession>Q9NZ71</accession>
<accession>A2A397</accession>
<accession>A2A398</accession>
<accession>B4DRM5</accession>
<accession>B4DYM3</accession>
<accession>B4E3N6</accession>
<accession>E1P5J4</accession>
<accession>E1P5J5</accession>
<accession>Q5JTV3</accession>
<accession>Q5JTV4</accession>
<accession>Q9BW37</accession>
<accession>Q9H402</accession>
<accession>Q9H4X6</accession>
<accession>Q9NX25</accession>
<accession>Q9NZ73</accession>
<accession>Q9UPR4</accession>
<accession>Q9Y4R6</accession>
<reference key="1">
    <citation type="journal article" date="2000" name="Proc. Natl. Acad. Sci. U.S.A.">
        <title>Overexpression of M68/DcR3 in human gastrointestinal tract tumors independent of gene amplification and its location in a four-gene cluster.</title>
        <authorList>
            <person name="Bai C."/>
            <person name="Connolly B."/>
            <person name="Metzker M.L."/>
            <person name="Hilliard C.A."/>
            <person name="Liu X."/>
            <person name="Sandig V."/>
            <person name="Soderman A."/>
            <person name="Galloway S.M."/>
            <person name="Liu Q."/>
            <person name="Austin C.P."/>
            <person name="Caskey C.T."/>
        </authorList>
    </citation>
    <scope>NUCLEOTIDE SEQUENCE [GENOMIC DNA / MRNA] (ISOFORMS 1 AND 2)</scope>
    <scope>AMPLIFICATION IN GASTRIC TUMORS</scope>
</reference>
<reference key="2">
    <citation type="journal article" date="1999" name="DNA Res.">
        <title>Prediction of the coding sequences of unidentified human genes. XIV. The complete sequences of 100 new cDNA clones from brain which code for large proteins in vitro.</title>
        <authorList>
            <person name="Kikuno R."/>
            <person name="Nagase T."/>
            <person name="Ishikawa K."/>
            <person name="Hirosawa M."/>
            <person name="Miyajima N."/>
            <person name="Tanaka A."/>
            <person name="Kotani H."/>
            <person name="Nomura N."/>
            <person name="Ohara O."/>
        </authorList>
    </citation>
    <scope>NUCLEOTIDE SEQUENCE [LARGE SCALE MRNA] (ISOFORM 1)</scope>
    <scope>VARIANT HIS-1042</scope>
    <source>
        <tissue>Brain</tissue>
    </source>
</reference>
<reference key="3">
    <citation type="journal article" date="2002" name="DNA Res.">
        <title>Construction of expression-ready cDNA clones for KIAA genes: manual curation of 330 KIAA cDNA clones.</title>
        <authorList>
            <person name="Nakajima D."/>
            <person name="Okazaki N."/>
            <person name="Yamakawa H."/>
            <person name="Kikuno R."/>
            <person name="Ohara O."/>
            <person name="Nagase T."/>
        </authorList>
    </citation>
    <scope>SEQUENCE REVISION</scope>
</reference>
<reference key="4">
    <citation type="submission" date="2012-02" db="EMBL/GenBank/DDBJ databases">
        <authorList>
            <person name="Ohara O."/>
            <person name="Nagase T."/>
            <person name="Kikuno R."/>
        </authorList>
    </citation>
    <scope>SEQUENCE REVISION TO 291-292</scope>
</reference>
<reference key="5">
    <citation type="journal article" date="2004" name="Nat. Genet.">
        <title>Complete sequencing and characterization of 21,243 full-length human cDNAs.</title>
        <authorList>
            <person name="Ota T."/>
            <person name="Suzuki Y."/>
            <person name="Nishikawa T."/>
            <person name="Otsuki T."/>
            <person name="Sugiyama T."/>
            <person name="Irie R."/>
            <person name="Wakamatsu A."/>
            <person name="Hayashi K."/>
            <person name="Sato H."/>
            <person name="Nagai K."/>
            <person name="Kimura K."/>
            <person name="Makita H."/>
            <person name="Sekine M."/>
            <person name="Obayashi M."/>
            <person name="Nishi T."/>
            <person name="Shibahara T."/>
            <person name="Tanaka T."/>
            <person name="Ishii S."/>
            <person name="Yamamoto J."/>
            <person name="Saito K."/>
            <person name="Kawai Y."/>
            <person name="Isono Y."/>
            <person name="Nakamura Y."/>
            <person name="Nagahari K."/>
            <person name="Murakami K."/>
            <person name="Yasuda T."/>
            <person name="Iwayanagi T."/>
            <person name="Wagatsuma M."/>
            <person name="Shiratori A."/>
            <person name="Sudo H."/>
            <person name="Hosoiri T."/>
            <person name="Kaku Y."/>
            <person name="Kodaira H."/>
            <person name="Kondo H."/>
            <person name="Sugawara M."/>
            <person name="Takahashi M."/>
            <person name="Kanda K."/>
            <person name="Yokoi T."/>
            <person name="Furuya T."/>
            <person name="Kikkawa E."/>
            <person name="Omura Y."/>
            <person name="Abe K."/>
            <person name="Kamihara K."/>
            <person name="Katsuta N."/>
            <person name="Sato K."/>
            <person name="Tanikawa M."/>
            <person name="Yamazaki M."/>
            <person name="Ninomiya K."/>
            <person name="Ishibashi T."/>
            <person name="Yamashita H."/>
            <person name="Murakawa K."/>
            <person name="Fujimori K."/>
            <person name="Tanai H."/>
            <person name="Kimata M."/>
            <person name="Watanabe M."/>
            <person name="Hiraoka S."/>
            <person name="Chiba Y."/>
            <person name="Ishida S."/>
            <person name="Ono Y."/>
            <person name="Takiguchi S."/>
            <person name="Watanabe S."/>
            <person name="Yosida M."/>
            <person name="Hotuta T."/>
            <person name="Kusano J."/>
            <person name="Kanehori K."/>
            <person name="Takahashi-Fujii A."/>
            <person name="Hara H."/>
            <person name="Tanase T.-O."/>
            <person name="Nomura Y."/>
            <person name="Togiya S."/>
            <person name="Komai F."/>
            <person name="Hara R."/>
            <person name="Takeuchi K."/>
            <person name="Arita M."/>
            <person name="Imose N."/>
            <person name="Musashino K."/>
            <person name="Yuuki H."/>
            <person name="Oshima A."/>
            <person name="Sasaki N."/>
            <person name="Aotsuka S."/>
            <person name="Yoshikawa Y."/>
            <person name="Matsunawa H."/>
            <person name="Ichihara T."/>
            <person name="Shiohata N."/>
            <person name="Sano S."/>
            <person name="Moriya S."/>
            <person name="Momiyama H."/>
            <person name="Satoh N."/>
            <person name="Takami S."/>
            <person name="Terashima Y."/>
            <person name="Suzuki O."/>
            <person name="Nakagawa S."/>
            <person name="Senoh A."/>
            <person name="Mizoguchi H."/>
            <person name="Goto Y."/>
            <person name="Shimizu F."/>
            <person name="Wakebe H."/>
            <person name="Hishigaki H."/>
            <person name="Watanabe T."/>
            <person name="Sugiyama A."/>
            <person name="Takemoto M."/>
            <person name="Kawakami B."/>
            <person name="Yamazaki M."/>
            <person name="Watanabe K."/>
            <person name="Kumagai A."/>
            <person name="Itakura S."/>
            <person name="Fukuzumi Y."/>
            <person name="Fujimori Y."/>
            <person name="Komiyama M."/>
            <person name="Tashiro H."/>
            <person name="Tanigami A."/>
            <person name="Fujiwara T."/>
            <person name="Ono T."/>
            <person name="Yamada K."/>
            <person name="Fujii Y."/>
            <person name="Ozaki K."/>
            <person name="Hirao M."/>
            <person name="Ohmori Y."/>
            <person name="Kawabata A."/>
            <person name="Hikiji T."/>
            <person name="Kobatake N."/>
            <person name="Inagaki H."/>
            <person name="Ikema Y."/>
            <person name="Okamoto S."/>
            <person name="Okitani R."/>
            <person name="Kawakami T."/>
            <person name="Noguchi S."/>
            <person name="Itoh T."/>
            <person name="Shigeta K."/>
            <person name="Senba T."/>
            <person name="Matsumura K."/>
            <person name="Nakajima Y."/>
            <person name="Mizuno T."/>
            <person name="Morinaga M."/>
            <person name="Sasaki M."/>
            <person name="Togashi T."/>
            <person name="Oyama M."/>
            <person name="Hata H."/>
            <person name="Watanabe M."/>
            <person name="Komatsu T."/>
            <person name="Mizushima-Sugano J."/>
            <person name="Satoh T."/>
            <person name="Shirai Y."/>
            <person name="Takahashi Y."/>
            <person name="Nakagawa K."/>
            <person name="Okumura K."/>
            <person name="Nagase T."/>
            <person name="Nomura N."/>
            <person name="Kikuchi H."/>
            <person name="Masuho Y."/>
            <person name="Yamashita R."/>
            <person name="Nakai K."/>
            <person name="Yada T."/>
            <person name="Nakamura Y."/>
            <person name="Ohara O."/>
            <person name="Isogai T."/>
            <person name="Sugano S."/>
        </authorList>
    </citation>
    <scope>NUCLEOTIDE SEQUENCE [LARGE SCALE MRNA] (ISOFORMS 5; 7; 8 AND 9)</scope>
    <scope>VARIANTS THR-929 AND HIS-1042</scope>
    <source>
        <tissue>Colon carcinoma</tissue>
        <tissue>Teratocarcinoma</tissue>
        <tissue>Testis</tissue>
        <tissue>Uterus</tissue>
    </source>
</reference>
<reference key="6">
    <citation type="journal article" date="2001" name="Nature">
        <title>The DNA sequence and comparative analysis of human chromosome 20.</title>
        <authorList>
            <person name="Deloukas P."/>
            <person name="Matthews L.H."/>
            <person name="Ashurst J.L."/>
            <person name="Burton J."/>
            <person name="Gilbert J.G.R."/>
            <person name="Jones M."/>
            <person name="Stavrides G."/>
            <person name="Almeida J.P."/>
            <person name="Babbage A.K."/>
            <person name="Bagguley C.L."/>
            <person name="Bailey J."/>
            <person name="Barlow K.F."/>
            <person name="Bates K.N."/>
            <person name="Beard L.M."/>
            <person name="Beare D.M."/>
            <person name="Beasley O.P."/>
            <person name="Bird C.P."/>
            <person name="Blakey S.E."/>
            <person name="Bridgeman A.M."/>
            <person name="Brown A.J."/>
            <person name="Buck D."/>
            <person name="Burrill W.D."/>
            <person name="Butler A.P."/>
            <person name="Carder C."/>
            <person name="Carter N.P."/>
            <person name="Chapman J.C."/>
            <person name="Clamp M."/>
            <person name="Clark G."/>
            <person name="Clark L.N."/>
            <person name="Clark S.Y."/>
            <person name="Clee C.M."/>
            <person name="Clegg S."/>
            <person name="Cobley V.E."/>
            <person name="Collier R.E."/>
            <person name="Connor R.E."/>
            <person name="Corby N.R."/>
            <person name="Coulson A."/>
            <person name="Coville G.J."/>
            <person name="Deadman R."/>
            <person name="Dhami P.D."/>
            <person name="Dunn M."/>
            <person name="Ellington A.G."/>
            <person name="Frankland J.A."/>
            <person name="Fraser A."/>
            <person name="French L."/>
            <person name="Garner P."/>
            <person name="Grafham D.V."/>
            <person name="Griffiths C."/>
            <person name="Griffiths M.N.D."/>
            <person name="Gwilliam R."/>
            <person name="Hall R.E."/>
            <person name="Hammond S."/>
            <person name="Harley J.L."/>
            <person name="Heath P.D."/>
            <person name="Ho S."/>
            <person name="Holden J.L."/>
            <person name="Howden P.J."/>
            <person name="Huckle E."/>
            <person name="Hunt A.R."/>
            <person name="Hunt S.E."/>
            <person name="Jekosch K."/>
            <person name="Johnson C.M."/>
            <person name="Johnson D."/>
            <person name="Kay M.P."/>
            <person name="Kimberley A.M."/>
            <person name="King A."/>
            <person name="Knights A."/>
            <person name="Laird G.K."/>
            <person name="Lawlor S."/>
            <person name="Lehvaeslaiho M.H."/>
            <person name="Leversha M.A."/>
            <person name="Lloyd C."/>
            <person name="Lloyd D.M."/>
            <person name="Lovell J.D."/>
            <person name="Marsh V.L."/>
            <person name="Martin S.L."/>
            <person name="McConnachie L.J."/>
            <person name="McLay K."/>
            <person name="McMurray A.A."/>
            <person name="Milne S.A."/>
            <person name="Mistry D."/>
            <person name="Moore M.J.F."/>
            <person name="Mullikin J.C."/>
            <person name="Nickerson T."/>
            <person name="Oliver K."/>
            <person name="Parker A."/>
            <person name="Patel R."/>
            <person name="Pearce T.A.V."/>
            <person name="Peck A.I."/>
            <person name="Phillimore B.J.C.T."/>
            <person name="Prathalingam S.R."/>
            <person name="Plumb R.W."/>
            <person name="Ramsay H."/>
            <person name="Rice C.M."/>
            <person name="Ross M.T."/>
            <person name="Scott C.E."/>
            <person name="Sehra H.K."/>
            <person name="Shownkeen R."/>
            <person name="Sims S."/>
            <person name="Skuce C.D."/>
            <person name="Smith M.L."/>
            <person name="Soderlund C."/>
            <person name="Steward C.A."/>
            <person name="Sulston J.E."/>
            <person name="Swann R.M."/>
            <person name="Sycamore N."/>
            <person name="Taylor R."/>
            <person name="Tee L."/>
            <person name="Thomas D.W."/>
            <person name="Thorpe A."/>
            <person name="Tracey A."/>
            <person name="Tromans A.C."/>
            <person name="Vaudin M."/>
            <person name="Wall M."/>
            <person name="Wallis J.M."/>
            <person name="Whitehead S.L."/>
            <person name="Whittaker P."/>
            <person name="Willey D.L."/>
            <person name="Williams L."/>
            <person name="Williams S.A."/>
            <person name="Wilming L."/>
            <person name="Wray P.W."/>
            <person name="Hubbard T."/>
            <person name="Durbin R.M."/>
            <person name="Bentley D.R."/>
            <person name="Beck S."/>
            <person name="Rogers J."/>
        </authorList>
    </citation>
    <scope>NUCLEOTIDE SEQUENCE [LARGE SCALE GENOMIC DNA]</scope>
    <scope>ALTERNATIVE SPLICING (ISOFORMS 2; 5 AND 6)</scope>
</reference>
<reference key="7">
    <citation type="submission" date="2005-09" db="EMBL/GenBank/DDBJ databases">
        <authorList>
            <person name="Mural R.J."/>
            <person name="Istrail S."/>
            <person name="Sutton G.G."/>
            <person name="Florea L."/>
            <person name="Halpern A.L."/>
            <person name="Mobarry C.M."/>
            <person name="Lippert R."/>
            <person name="Walenz B."/>
            <person name="Shatkay H."/>
            <person name="Dew I."/>
            <person name="Miller J.R."/>
            <person name="Flanigan M.J."/>
            <person name="Edwards N.J."/>
            <person name="Bolanos R."/>
            <person name="Fasulo D."/>
            <person name="Halldorsson B.V."/>
            <person name="Hannenhalli S."/>
            <person name="Turner R."/>
            <person name="Yooseph S."/>
            <person name="Lu F."/>
            <person name="Nusskern D.R."/>
            <person name="Shue B.C."/>
            <person name="Zheng X.H."/>
            <person name="Zhong F."/>
            <person name="Delcher A.L."/>
            <person name="Huson D.H."/>
            <person name="Kravitz S.A."/>
            <person name="Mouchard L."/>
            <person name="Reinert K."/>
            <person name="Remington K.A."/>
            <person name="Clark A.G."/>
            <person name="Waterman M.S."/>
            <person name="Eichler E.E."/>
            <person name="Adams M.D."/>
            <person name="Hunkapiller M.W."/>
            <person name="Myers E.W."/>
            <person name="Venter J.C."/>
        </authorList>
    </citation>
    <scope>NUCLEOTIDE SEQUENCE [LARGE SCALE GENOMIC DNA]</scope>
</reference>
<reference key="8">
    <citation type="journal article" date="2007" name="BMC Genomics">
        <title>The full-ORF clone resource of the German cDNA consortium.</title>
        <authorList>
            <person name="Bechtel S."/>
            <person name="Rosenfelder H."/>
            <person name="Duda A."/>
            <person name="Schmidt C.P."/>
            <person name="Ernst U."/>
            <person name="Wellenreuther R."/>
            <person name="Mehrle A."/>
            <person name="Schuster C."/>
            <person name="Bahr A."/>
            <person name="Bloecker H."/>
            <person name="Heubner D."/>
            <person name="Hoerlein A."/>
            <person name="Michel G."/>
            <person name="Wedler H."/>
            <person name="Koehrer K."/>
            <person name="Ottenwaelder B."/>
            <person name="Poustka A."/>
            <person name="Wiemann S."/>
            <person name="Schupp I."/>
        </authorList>
    </citation>
    <scope>NUCLEOTIDE SEQUENCE [LARGE SCALE MRNA] OF 708-1219 (ISOFORM 4)</scope>
    <source>
        <tissue>Testis</tissue>
    </source>
</reference>
<reference key="9">
    <citation type="journal article" date="2008" name="Cell">
        <title>RTEL1 maintains genomic stability by suppressing homologous recombination.</title>
        <authorList>
            <person name="Barber L.J."/>
            <person name="Youds J.L."/>
            <person name="Ward J.D."/>
            <person name="McIlwraith M.J."/>
            <person name="O'Neil N.J."/>
            <person name="Petalcorin M.I.R."/>
            <person name="Martin J.S."/>
            <person name="Collis S.J."/>
            <person name="Cantor S.B."/>
            <person name="Auclair M."/>
            <person name="Tissenbaum H."/>
            <person name="West S.C."/>
            <person name="Rose A.M."/>
            <person name="Boulton S.J."/>
        </authorList>
    </citation>
    <scope>FUNCTION AS AN ATPASE</scope>
    <scope>CATALYTIC ACTIVITY</scope>
    <scope>MUTAGENESIS OF LYS-48</scope>
</reference>
<reference key="10">
    <citation type="journal article" date="2012" name="Science">
        <title>MMS19 links cytoplasmic iron-sulfur cluster assembly to DNA metabolism.</title>
        <authorList>
            <person name="Gari K."/>
            <person name="Leon Ortiz A.M."/>
            <person name="Borel V."/>
            <person name="Flynn H."/>
            <person name="Skehel J.M."/>
            <person name="Boulton S.J."/>
        </authorList>
    </citation>
    <scope>INTERACTION WITH MMS19</scope>
</reference>
<reference key="11">
    <citation type="journal article" date="2013" name="Am. J. Hum. Genet.">
        <title>Constitutional mutations in RTEL1 cause severe dyskeratosis congenita.</title>
        <authorList>
            <person name="Walne A.J."/>
            <person name="Vulliamy T."/>
            <person name="Kirwan M."/>
            <person name="Plagnol V."/>
            <person name="Dokal I."/>
        </authorList>
    </citation>
    <scope>FUNCTION</scope>
    <scope>VARIANTS DKCB5 LYS-251; ILE-492; ARG-710; VAL-739; GLU-897; TRP-957 AND LEU-964</scope>
    <scope>VARIANT DKCB5 HIS-509 (ISOFORM 5)</scope>
    <scope>VARIANT DKCB5 HIS-1264 (ISOFORMS 1 AND 6)</scope>
</reference>
<reference key="12">
    <citation type="journal article" date="2013" name="J. Biol. Chem.">
        <title>IOP1 protein is an external component of the human cytosolic iron-sulfur cluster assembly (CIA) machinery and functions in the MMS19 protein-dependent CIA pathway.</title>
        <authorList>
            <person name="Seki M."/>
            <person name="Takeda Y."/>
            <person name="Iwai K."/>
            <person name="Tanaka K."/>
        </authorList>
    </citation>
    <scope>SUBCELLULAR LOCATION</scope>
    <scope>INTERACTION WITH MMS19</scope>
</reference>
<reference key="13">
    <citation type="journal article" date="2013" name="Proc. Natl. Acad. Sci. U.S.A.">
        <title>Inherited mutations in the helicase RTEL1 cause telomere dysfunction and Hoyeraal-Hreidarsson syndrome.</title>
        <authorList>
            <person name="Deng Z."/>
            <person name="Glousker G."/>
            <person name="Molczan A."/>
            <person name="Fox A.J."/>
            <person name="Lamm N."/>
            <person name="Dheekollu J."/>
            <person name="Weizman O.E."/>
            <person name="Schertzer M."/>
            <person name="Wang Z."/>
            <person name="Vladimirova O."/>
            <person name="Schug J."/>
            <person name="Aker M."/>
            <person name="Londono-Vallejo A."/>
            <person name="Kaestner K.H."/>
            <person name="Lieberman P.M."/>
            <person name="Tzfati Y."/>
        </authorList>
    </citation>
    <scope>INTERACTION WITH TERF1</scope>
    <scope>VARIANT DKCB5 ILE-492</scope>
</reference>
<reference key="14">
    <citation type="journal article" date="2015" name="Nat. Genet.">
        <title>Exome sequencing links mutations in PARN and RTEL1 with familial pulmonary fibrosis and telomere shortening.</title>
        <authorList>
            <person name="Stuart B.D."/>
            <person name="Choi J."/>
            <person name="Zaidi S."/>
            <person name="Xing C."/>
            <person name="Holohan B."/>
            <person name="Chen R."/>
            <person name="Choi M."/>
            <person name="Dharwadkar P."/>
            <person name="Torres F."/>
            <person name="Girod C.E."/>
            <person name="Weissler J."/>
            <person name="Fitzgerald J."/>
            <person name="Kershaw C."/>
            <person name="Klesney-Tait J."/>
            <person name="Mageto Y."/>
            <person name="Shay J.W."/>
            <person name="Ji W."/>
            <person name="Bilguvar K."/>
            <person name="Mane S."/>
            <person name="Lifton R.P."/>
            <person name="Garcia C.K."/>
        </authorList>
    </citation>
    <scope>INVOLVEMENT IN PFBMFT3</scope>
    <scope>VARIANTS PFBMFT3 LEU-484; LEU-647 AND PRO-1124</scope>
</reference>
<reference key="15">
    <citation type="journal article" date="2013" name="Hum. Genet.">
        <title>Germline mutations of regulator of telomere elongation helicase 1, RTEL1, in dyskeratosis congenita.</title>
        <authorList>
            <person name="Ballew B.J."/>
            <person name="Yeager M."/>
            <person name="Jacobs K."/>
            <person name="Giri N."/>
            <person name="Boland J."/>
            <person name="Burdett L."/>
            <person name="Alter B.P."/>
            <person name="Savage S.A."/>
        </authorList>
    </citation>
    <scope>VARIANT DKCB5 ASP-591</scope>
    <scope>VARIANT DKCA4 THR-621</scope>
    <scope>VARIANTS SER-124; GLN-684; PRO-829; ASP-849; THR-929; HIS-1034; HIS-1042 AND THR-1059</scope>
</reference>
<reference key="16">
    <citation type="journal article" date="2013" name="Hum. Mol. Genet.">
        <title>Human RTEL1 deficiency causes Hoyeraal-Hreidarsson syndrome with short telomeres and genome instability.</title>
        <authorList>
            <person name="Le Guen T."/>
            <person name="Jullien L."/>
            <person name="Touzot F."/>
            <person name="Schertzer M."/>
            <person name="Gaillard L."/>
            <person name="Perderiset M."/>
            <person name="Carpentier W."/>
            <person name="Nitschke P."/>
            <person name="Picard C."/>
            <person name="Couillault G."/>
            <person name="Soulier J."/>
            <person name="Fischer A."/>
            <person name="Callebaut I."/>
            <person name="Jabado N."/>
            <person name="Londono-Vallejo A."/>
            <person name="de Villartay J.P."/>
            <person name="Revy P."/>
        </authorList>
    </citation>
    <scope>VARIANTS DKCB5 MET-699 AND MET-745</scope>
    <scope>VARIANT DKCB5 ARG-489 (ISOFORM 5)</scope>
    <scope>VARIANT DKCB5 ARG-1244 (ISOFORMS 1 AND 6)</scope>
</reference>
<reference key="17">
    <citation type="journal article" date="2013" name="PLoS Genet.">
        <title>A recessive founder mutation in regulator of telomere elongation helicase 1, RTEL1, underlies severe immunodeficiency and features of Hoyeraal Hreidarsson syndrome.</title>
        <authorList>
            <person name="Ballew B.J."/>
            <person name="Joseph V."/>
            <person name="De S."/>
            <person name="Sarek G."/>
            <person name="Vannier J.B."/>
            <person name="Stracker T."/>
            <person name="Schrader K.A."/>
            <person name="Small T.N."/>
            <person name="O'Reilly R."/>
            <person name="Manschreck C."/>
            <person name="Harlan Fleischut M.M."/>
            <person name="Zhang L."/>
            <person name="Sullivan J."/>
            <person name="Stratton K."/>
            <person name="Yeager M."/>
            <person name="Jacobs K."/>
            <person name="Giri N."/>
            <person name="Alter B.P."/>
            <person name="Boland J."/>
            <person name="Burdett L."/>
            <person name="Offit K."/>
            <person name="Boulton S.J."/>
            <person name="Savage S.A."/>
            <person name="Petrini J.H."/>
        </authorList>
    </citation>
    <scope>VARIANTS DKCB5 HIS-509 (ISOFORM 5) AND HIS-1264 (ISOFORMS 1 AND 6)</scope>
    <scope>FUNCTION</scope>
    <scope>CHARACTERIZATION OF VARIANTS DKCB5 HIS-509 (ISOFORM 5) AND HIS-1264 (ISOFORMS 1 AND 6)</scope>
</reference>
<keyword id="KW-0002">3D-structure</keyword>
<keyword id="KW-0004">4Fe-4S</keyword>
<keyword id="KW-0025">Alternative splicing</keyword>
<keyword id="KW-0067">ATP-binding</keyword>
<keyword id="KW-0225">Disease variant</keyword>
<keyword id="KW-0227">DNA damage</keyword>
<keyword id="KW-0234">DNA repair</keyword>
<keyword id="KW-0238">DNA-binding</keyword>
<keyword id="KW-1011">Dyskeratosis congenita</keyword>
<keyword id="KW-0347">Helicase</keyword>
<keyword id="KW-0378">Hydrolase</keyword>
<keyword id="KW-0408">Iron</keyword>
<keyword id="KW-0411">Iron-sulfur</keyword>
<keyword id="KW-0413">Isomerase</keyword>
<keyword id="KW-0479">Metal-binding</keyword>
<keyword id="KW-0547">Nucleotide-binding</keyword>
<keyword id="KW-0539">Nucleus</keyword>
<keyword id="KW-1267">Proteomics identification</keyword>
<keyword id="KW-1185">Reference proteome</keyword>
<gene>
    <name evidence="1" type="primary">RTEL1</name>
    <name type="synonym">C20orf41</name>
    <name type="synonym">KIAA1088</name>
    <name type="synonym">NHL</name>
</gene>
<sequence length="1219" mass="133683">MPKIVLNGVTVDFPFQPYKCQQEYMTKVLECLQQKVNGILESPTGTGKTLCLLCTTLAWREHLRDGISARKIAERAQGELFPDRALSSWGNAAAAAGDPIACYTDIPKIIYASRTHSQLTQVINELRNTSYRPKVCVLGSREQLCIHPEVKKQESNHLQIHLCRKKVASRSCHFYNNVEEKSLEQELASPILDIEDLVKSGSKHRVCPYYLSRNLKQQADIIFMPYNYLLDAKSRRAHNIDLKGTVVIFDEAHNVEKMCEESASFDLTPHDLASGLDVIDQVLEEQTKAAQQGEPHPEFSADSPSPGLNMELEDIAKLKMILLRLEGAIDAVELPGDDSGVTKPGSYIFELFAEAQITFQTKGCILDSLDQIIQHLAGRAGVFTNTAGLQKLADIIQIVFSVDPSEGSPGSPAGLGALQSYKVHIHPDAGHRRTAQRSDAWSTTAARKRGKVLSYWCFSPGHSMHELVRQGVRSLILTSGTLAPVSSFALEMQIPFPVCLENPHIIDKHQIWVGVVPRGPDGAQLSSAFDRRFSEECLSSLGKALGNIARVVPYGLLIFFPSYPVMEKSLEFWRARDLARKMEALKPLFVEPRSKGSFSETISAYYARVAAPGSTGATFLAVCRGKASEGLDFSDTNGRGVIVTGLPYPPRMDPRVVLKMQFLDEMKGQGGAGGQFLSGQEWYRQQASRAVNQAIGRVIRHRQDYGAVFLCDHRFAFADARAQLPSWVRPHVRVYDNFGHVIRDVAQFFRVAERTMPAPAPRATAPSVRGEDAVSEAKSPGPFFSTRKAKSLDLHVPSLKQRSSGSPAAGDPESSLCVEYEQEPVPARQRPRGLLAALEHSEQRAGSPGEEQAHSCSTLSLLSEKRPAEEPRGGRKKIRLVSHPEEPVAGAQTDRAKLFMVAVKQELSQANFATFTQALQDYKGSDDFAALAACLGPLFAEDPKKHNLLQGFYQFVRPHHKQQFEEVCIQLTGRGCGYRPEHSIPRRQRAQPVLDPTGRTAPDPKLTVSTAAAQQLDPQEHLNQGRPHLSPRPPPTGDPGSQPQWGSGVPRAGKQGQHAVSAYLADARRALGSAGCSQLLAALTAYKQDDDLDKVLAVLAALTTAKPEDFPLLHRFSMFVRPHHKQRFSQTCTDLTGRPYPGMEPPGPQEERLAVPPVLTHRAPQPGPSRSEKTGKTQSKISSFLRQRPAGTVGAGGEDAGPSQSSGPPHGPAASEWGL</sequence>
<protein>
    <recommendedName>
        <fullName evidence="1">Regulator of telomere elongation helicase 1</fullName>
        <ecNumber evidence="1">5.6.2.-</ecNumber>
    </recommendedName>
    <alternativeName>
        <fullName>Novel helicase-like</fullName>
    </alternativeName>
</protein>
<evidence type="ECO:0000255" key="1">
    <source>
        <dbReference type="HAMAP-Rule" id="MF_03065"/>
    </source>
</evidence>
<evidence type="ECO:0000256" key="2">
    <source>
        <dbReference type="SAM" id="MobiDB-lite"/>
    </source>
</evidence>
<evidence type="ECO:0000269" key="3">
    <source>
    </source>
</evidence>
<evidence type="ECO:0000269" key="4">
    <source>
    </source>
</evidence>
<evidence type="ECO:0000269" key="5">
    <source>
    </source>
</evidence>
<evidence type="ECO:0000269" key="6">
    <source>
    </source>
</evidence>
<evidence type="ECO:0000269" key="7">
    <source>
    </source>
</evidence>
<evidence type="ECO:0000269" key="8">
    <source>
    </source>
</evidence>
<evidence type="ECO:0000269" key="9">
    <source>
    </source>
</evidence>
<evidence type="ECO:0000269" key="10">
    <source>
    </source>
</evidence>
<evidence type="ECO:0000269" key="11">
    <source>
    </source>
</evidence>
<evidence type="ECO:0000269" key="12">
    <source>
    </source>
</evidence>
<evidence type="ECO:0000269" key="13">
    <source>
    </source>
</evidence>
<evidence type="ECO:0000303" key="14">
    <source>
    </source>
</evidence>
<evidence type="ECO:0000303" key="15">
    <source>
    </source>
</evidence>
<evidence type="ECO:0000303" key="16">
    <source>
    </source>
</evidence>
<evidence type="ECO:0000303" key="17">
    <source>
    </source>
</evidence>
<evidence type="ECO:0000305" key="18"/>
<evidence type="ECO:0007829" key="19">
    <source>
        <dbReference type="PDB" id="7WU8"/>
    </source>
</evidence>